<keyword id="KW-0460">Magnesium</keyword>
<keyword id="KW-0479">Metal-binding</keyword>
<keyword id="KW-0808">Transferase</keyword>
<name>ISPT_STAAC</name>
<reference key="1">
    <citation type="journal article" date="2005" name="J. Bacteriol.">
        <title>Insights on evolution of virulence and resistance from the complete genome analysis of an early methicillin-resistant Staphylococcus aureus strain and a biofilm-producing methicillin-resistant Staphylococcus epidermidis strain.</title>
        <authorList>
            <person name="Gill S.R."/>
            <person name="Fouts D.E."/>
            <person name="Archer G.L."/>
            <person name="Mongodin E.F."/>
            <person name="DeBoy R.T."/>
            <person name="Ravel J."/>
            <person name="Paulsen I.T."/>
            <person name="Kolonay J.F."/>
            <person name="Brinkac L.M."/>
            <person name="Beanan M.J."/>
            <person name="Dodson R.J."/>
            <person name="Daugherty S.C."/>
            <person name="Madupu R."/>
            <person name="Angiuoli S.V."/>
            <person name="Durkin A.S."/>
            <person name="Haft D.H."/>
            <person name="Vamathevan J.J."/>
            <person name="Khouri H."/>
            <person name="Utterback T.R."/>
            <person name="Lee C."/>
            <person name="Dimitrov G."/>
            <person name="Jiang L."/>
            <person name="Qin H."/>
            <person name="Weidman J."/>
            <person name="Tran K."/>
            <person name="Kang K.H."/>
            <person name="Hance I.R."/>
            <person name="Nelson K.E."/>
            <person name="Fraser C.M."/>
        </authorList>
    </citation>
    <scope>NUCLEOTIDE SEQUENCE [LARGE SCALE GENOMIC DNA]</scope>
    <source>
        <strain>COL</strain>
    </source>
</reference>
<evidence type="ECO:0000255" key="1">
    <source>
        <dbReference type="HAMAP-Rule" id="MF_01139"/>
    </source>
</evidence>
<proteinExistence type="inferred from homology"/>
<comment type="function">
    <text evidence="1">Catalyzes the condensation of isopentenyl diphosphate (IPP) with allylic pyrophosphates generating different type of terpenoids.</text>
</comment>
<comment type="cofactor">
    <cofactor evidence="1">
        <name>Mg(2+)</name>
        <dbReference type="ChEBI" id="CHEBI:18420"/>
    </cofactor>
    <text evidence="1">Binds 2 magnesium ions per subunit.</text>
</comment>
<comment type="subunit">
    <text evidence="1">Homodimer.</text>
</comment>
<comment type="similarity">
    <text evidence="1">Belongs to the UPP synthase family.</text>
</comment>
<sequence length="256" mass="29848">MFKKLINKKNTINNYNEELDSSNIPEHIAIIMDGNGRWAKKRKMPRIKGHYEGMQTIKKITRVASDIGVKYLTLYAFSTENWSRPESEVNYIMNLPVNFLKTFLPELIEKNVKVETIGFTDKLPKSTIEAINNAKEKTANNTGLKLIFAINYGGRAELVHSIKNMFDELHQQGLNSDIIDETYINNHLMTKDYPDPELLIRTSGEQRISNFLIWQVSYSEFIFNQKLWPDFDEDELIKCIKIYQSRQRRFGGLSEE</sequence>
<protein>
    <recommendedName>
        <fullName evidence="1">Isoprenyl transferase</fullName>
        <ecNumber evidence="1">2.5.1.-</ecNumber>
    </recommendedName>
</protein>
<dbReference type="EC" id="2.5.1.-" evidence="1"/>
<dbReference type="EMBL" id="CP000046">
    <property type="protein sequence ID" value="AAW38110.1"/>
    <property type="molecule type" value="Genomic_DNA"/>
</dbReference>
<dbReference type="RefSeq" id="WP_000473705.1">
    <property type="nucleotide sequence ID" value="NZ_JBGOFO010000002.1"/>
</dbReference>
<dbReference type="SMR" id="Q5HGH1"/>
<dbReference type="KEGG" id="sac:SACOL1279"/>
<dbReference type="HOGENOM" id="CLU_038505_1_1_9"/>
<dbReference type="Proteomes" id="UP000000530">
    <property type="component" value="Chromosome"/>
</dbReference>
<dbReference type="GO" id="GO:0005829">
    <property type="term" value="C:cytosol"/>
    <property type="evidence" value="ECO:0007669"/>
    <property type="project" value="TreeGrafter"/>
</dbReference>
<dbReference type="GO" id="GO:0008834">
    <property type="term" value="F:ditrans,polycis-undecaprenyl-diphosphate synthase [(2E,6E)-farnesyl-diphosphate specific] activity"/>
    <property type="evidence" value="ECO:0007669"/>
    <property type="project" value="TreeGrafter"/>
</dbReference>
<dbReference type="GO" id="GO:0000287">
    <property type="term" value="F:magnesium ion binding"/>
    <property type="evidence" value="ECO:0007669"/>
    <property type="project" value="UniProtKB-UniRule"/>
</dbReference>
<dbReference type="GO" id="GO:0030145">
    <property type="term" value="F:manganese ion binding"/>
    <property type="evidence" value="ECO:0007669"/>
    <property type="project" value="TreeGrafter"/>
</dbReference>
<dbReference type="GO" id="GO:0016094">
    <property type="term" value="P:polyprenol biosynthetic process"/>
    <property type="evidence" value="ECO:0007669"/>
    <property type="project" value="TreeGrafter"/>
</dbReference>
<dbReference type="CDD" id="cd00475">
    <property type="entry name" value="Cis_IPPS"/>
    <property type="match status" value="1"/>
</dbReference>
<dbReference type="FunFam" id="3.40.1180.10:FF:000001">
    <property type="entry name" value="(2E,6E)-farnesyl-diphosphate-specific ditrans,polycis-undecaprenyl-diphosphate synthase"/>
    <property type="match status" value="1"/>
</dbReference>
<dbReference type="Gene3D" id="3.40.1180.10">
    <property type="entry name" value="Decaprenyl diphosphate synthase-like"/>
    <property type="match status" value="1"/>
</dbReference>
<dbReference type="HAMAP" id="MF_01139">
    <property type="entry name" value="ISPT"/>
    <property type="match status" value="1"/>
</dbReference>
<dbReference type="InterPro" id="IPR001441">
    <property type="entry name" value="UPP_synth-like"/>
</dbReference>
<dbReference type="InterPro" id="IPR018520">
    <property type="entry name" value="UPP_synth-like_CS"/>
</dbReference>
<dbReference type="InterPro" id="IPR036424">
    <property type="entry name" value="UPP_synth-like_sf"/>
</dbReference>
<dbReference type="NCBIfam" id="NF011405">
    <property type="entry name" value="PRK14830.1"/>
    <property type="match status" value="1"/>
</dbReference>
<dbReference type="NCBIfam" id="TIGR00055">
    <property type="entry name" value="uppS"/>
    <property type="match status" value="1"/>
</dbReference>
<dbReference type="PANTHER" id="PTHR10291:SF0">
    <property type="entry name" value="DEHYDRODOLICHYL DIPHOSPHATE SYNTHASE 2"/>
    <property type="match status" value="1"/>
</dbReference>
<dbReference type="PANTHER" id="PTHR10291">
    <property type="entry name" value="DEHYDRODOLICHYL DIPHOSPHATE SYNTHASE FAMILY MEMBER"/>
    <property type="match status" value="1"/>
</dbReference>
<dbReference type="Pfam" id="PF01255">
    <property type="entry name" value="Prenyltransf"/>
    <property type="match status" value="1"/>
</dbReference>
<dbReference type="SUPFAM" id="SSF64005">
    <property type="entry name" value="Undecaprenyl diphosphate synthase"/>
    <property type="match status" value="1"/>
</dbReference>
<dbReference type="PROSITE" id="PS01066">
    <property type="entry name" value="UPP_SYNTHASE"/>
    <property type="match status" value="1"/>
</dbReference>
<organism>
    <name type="scientific">Staphylococcus aureus (strain COL)</name>
    <dbReference type="NCBI Taxonomy" id="93062"/>
    <lineage>
        <taxon>Bacteria</taxon>
        <taxon>Bacillati</taxon>
        <taxon>Bacillota</taxon>
        <taxon>Bacilli</taxon>
        <taxon>Bacillales</taxon>
        <taxon>Staphylococcaceae</taxon>
        <taxon>Staphylococcus</taxon>
    </lineage>
</organism>
<gene>
    <name evidence="1" type="primary">uppS</name>
    <name type="ordered locus">SACOL1279</name>
</gene>
<feature type="chain" id="PRO_0000123671" description="Isoprenyl transferase">
    <location>
        <begin position="1"/>
        <end position="256"/>
    </location>
</feature>
<feature type="active site" evidence="1">
    <location>
        <position position="33"/>
    </location>
</feature>
<feature type="active site" description="Proton acceptor" evidence="1">
    <location>
        <position position="81"/>
    </location>
</feature>
<feature type="binding site" evidence="1">
    <location>
        <position position="33"/>
    </location>
    <ligand>
        <name>Mg(2+)</name>
        <dbReference type="ChEBI" id="CHEBI:18420"/>
    </ligand>
</feature>
<feature type="binding site" evidence="1">
    <location>
        <begin position="34"/>
        <end position="37"/>
    </location>
    <ligand>
        <name>substrate</name>
    </ligand>
</feature>
<feature type="binding site" evidence="1">
    <location>
        <position position="38"/>
    </location>
    <ligand>
        <name>substrate</name>
    </ligand>
</feature>
<feature type="binding site" evidence="1">
    <location>
        <position position="46"/>
    </location>
    <ligand>
        <name>substrate</name>
    </ligand>
</feature>
<feature type="binding site" evidence="1">
    <location>
        <position position="50"/>
    </location>
    <ligand>
        <name>substrate</name>
    </ligand>
</feature>
<feature type="binding site" evidence="1">
    <location>
        <begin position="78"/>
        <end position="80"/>
    </location>
    <ligand>
        <name>substrate</name>
    </ligand>
</feature>
<feature type="binding site" evidence="1">
    <location>
        <position position="82"/>
    </location>
    <ligand>
        <name>substrate</name>
    </ligand>
</feature>
<feature type="binding site" evidence="1">
    <location>
        <position position="84"/>
    </location>
    <ligand>
        <name>substrate</name>
    </ligand>
</feature>
<feature type="binding site" evidence="1">
    <location>
        <position position="201"/>
    </location>
    <ligand>
        <name>substrate</name>
    </ligand>
</feature>
<feature type="binding site" evidence="1">
    <location>
        <begin position="207"/>
        <end position="209"/>
    </location>
    <ligand>
        <name>substrate</name>
    </ligand>
</feature>
<feature type="binding site" evidence="1">
    <location>
        <position position="220"/>
    </location>
    <ligand>
        <name>Mg(2+)</name>
        <dbReference type="ChEBI" id="CHEBI:18420"/>
    </ligand>
</feature>
<accession>Q5HGH1</accession>